<name>MIAB_XANCB</name>
<accession>B0RRW2</accession>
<proteinExistence type="inferred from homology"/>
<organism>
    <name type="scientific">Xanthomonas campestris pv. campestris (strain B100)</name>
    <dbReference type="NCBI Taxonomy" id="509169"/>
    <lineage>
        <taxon>Bacteria</taxon>
        <taxon>Pseudomonadati</taxon>
        <taxon>Pseudomonadota</taxon>
        <taxon>Gammaproteobacteria</taxon>
        <taxon>Lysobacterales</taxon>
        <taxon>Lysobacteraceae</taxon>
        <taxon>Xanthomonas</taxon>
    </lineage>
</organism>
<reference key="1">
    <citation type="journal article" date="2008" name="J. Biotechnol.">
        <title>The genome of Xanthomonas campestris pv. campestris B100 and its use for the reconstruction of metabolic pathways involved in xanthan biosynthesis.</title>
        <authorList>
            <person name="Vorhoelter F.-J."/>
            <person name="Schneiker S."/>
            <person name="Goesmann A."/>
            <person name="Krause L."/>
            <person name="Bekel T."/>
            <person name="Kaiser O."/>
            <person name="Linke B."/>
            <person name="Patschkowski T."/>
            <person name="Rueckert C."/>
            <person name="Schmid J."/>
            <person name="Sidhu V.K."/>
            <person name="Sieber V."/>
            <person name="Tauch A."/>
            <person name="Watt S.A."/>
            <person name="Weisshaar B."/>
            <person name="Becker A."/>
            <person name="Niehaus K."/>
            <person name="Puehler A."/>
        </authorList>
    </citation>
    <scope>NUCLEOTIDE SEQUENCE [LARGE SCALE GENOMIC DNA]</scope>
    <source>
        <strain>B100</strain>
    </source>
</reference>
<protein>
    <recommendedName>
        <fullName evidence="1">tRNA-2-methylthio-N(6)-dimethylallyladenosine synthase</fullName>
        <ecNumber evidence="1">2.8.4.3</ecNumber>
    </recommendedName>
    <alternativeName>
        <fullName evidence="1">(Dimethylallyl)adenosine tRNA methylthiotransferase MiaB</fullName>
    </alternativeName>
    <alternativeName>
        <fullName evidence="1">tRNA-i(6)A37 methylthiotransferase</fullName>
    </alternativeName>
</protein>
<keyword id="KW-0004">4Fe-4S</keyword>
<keyword id="KW-0963">Cytoplasm</keyword>
<keyword id="KW-0408">Iron</keyword>
<keyword id="KW-0411">Iron-sulfur</keyword>
<keyword id="KW-0479">Metal-binding</keyword>
<keyword id="KW-0949">S-adenosyl-L-methionine</keyword>
<keyword id="KW-0808">Transferase</keyword>
<keyword id="KW-0819">tRNA processing</keyword>
<dbReference type="EC" id="2.8.4.3" evidence="1"/>
<dbReference type="EMBL" id="AM920689">
    <property type="protein sequence ID" value="CAP51197.1"/>
    <property type="molecule type" value="Genomic_DNA"/>
</dbReference>
<dbReference type="SMR" id="B0RRW2"/>
<dbReference type="KEGG" id="xca:xcc-b100_1844"/>
<dbReference type="HOGENOM" id="CLU_018697_2_2_6"/>
<dbReference type="Proteomes" id="UP000001188">
    <property type="component" value="Chromosome"/>
</dbReference>
<dbReference type="GO" id="GO:0005829">
    <property type="term" value="C:cytosol"/>
    <property type="evidence" value="ECO:0007669"/>
    <property type="project" value="TreeGrafter"/>
</dbReference>
<dbReference type="GO" id="GO:0051539">
    <property type="term" value="F:4 iron, 4 sulfur cluster binding"/>
    <property type="evidence" value="ECO:0007669"/>
    <property type="project" value="UniProtKB-UniRule"/>
</dbReference>
<dbReference type="GO" id="GO:0046872">
    <property type="term" value="F:metal ion binding"/>
    <property type="evidence" value="ECO:0007669"/>
    <property type="project" value="UniProtKB-KW"/>
</dbReference>
<dbReference type="GO" id="GO:0035597">
    <property type="term" value="F:N6-isopentenyladenosine methylthiotransferase activity"/>
    <property type="evidence" value="ECO:0007669"/>
    <property type="project" value="TreeGrafter"/>
</dbReference>
<dbReference type="CDD" id="cd01335">
    <property type="entry name" value="Radical_SAM"/>
    <property type="match status" value="1"/>
</dbReference>
<dbReference type="FunFam" id="3.40.50.12160:FF:000001">
    <property type="entry name" value="tRNA-2-methylthio-N(6)-dimethylallyladenosine synthase"/>
    <property type="match status" value="1"/>
</dbReference>
<dbReference type="FunFam" id="3.80.30.20:FF:000001">
    <property type="entry name" value="tRNA-2-methylthio-N(6)-dimethylallyladenosine synthase 2"/>
    <property type="match status" value="1"/>
</dbReference>
<dbReference type="Gene3D" id="3.40.50.12160">
    <property type="entry name" value="Methylthiotransferase, N-terminal domain"/>
    <property type="match status" value="1"/>
</dbReference>
<dbReference type="Gene3D" id="3.80.30.20">
    <property type="entry name" value="tm_1862 like domain"/>
    <property type="match status" value="1"/>
</dbReference>
<dbReference type="HAMAP" id="MF_01864">
    <property type="entry name" value="tRNA_metthiotr_MiaB"/>
    <property type="match status" value="1"/>
</dbReference>
<dbReference type="InterPro" id="IPR006638">
    <property type="entry name" value="Elp3/MiaA/NifB-like_rSAM"/>
</dbReference>
<dbReference type="InterPro" id="IPR005839">
    <property type="entry name" value="Methylthiotransferase"/>
</dbReference>
<dbReference type="InterPro" id="IPR020612">
    <property type="entry name" value="Methylthiotransferase_CS"/>
</dbReference>
<dbReference type="InterPro" id="IPR013848">
    <property type="entry name" value="Methylthiotransferase_N"/>
</dbReference>
<dbReference type="InterPro" id="IPR038135">
    <property type="entry name" value="Methylthiotransferase_N_sf"/>
</dbReference>
<dbReference type="InterPro" id="IPR006463">
    <property type="entry name" value="MiaB_methiolase"/>
</dbReference>
<dbReference type="InterPro" id="IPR007197">
    <property type="entry name" value="rSAM"/>
</dbReference>
<dbReference type="InterPro" id="IPR023404">
    <property type="entry name" value="rSAM_horseshoe"/>
</dbReference>
<dbReference type="InterPro" id="IPR002792">
    <property type="entry name" value="TRAM_dom"/>
</dbReference>
<dbReference type="NCBIfam" id="TIGR01574">
    <property type="entry name" value="miaB-methiolase"/>
    <property type="match status" value="1"/>
</dbReference>
<dbReference type="NCBIfam" id="TIGR00089">
    <property type="entry name" value="MiaB/RimO family radical SAM methylthiotransferase"/>
    <property type="match status" value="1"/>
</dbReference>
<dbReference type="PANTHER" id="PTHR43020">
    <property type="entry name" value="CDK5 REGULATORY SUBUNIT-ASSOCIATED PROTEIN 1"/>
    <property type="match status" value="1"/>
</dbReference>
<dbReference type="PANTHER" id="PTHR43020:SF2">
    <property type="entry name" value="MITOCHONDRIAL TRNA METHYLTHIOTRANSFERASE CDK5RAP1"/>
    <property type="match status" value="1"/>
</dbReference>
<dbReference type="Pfam" id="PF04055">
    <property type="entry name" value="Radical_SAM"/>
    <property type="match status" value="1"/>
</dbReference>
<dbReference type="Pfam" id="PF01938">
    <property type="entry name" value="TRAM"/>
    <property type="match status" value="1"/>
</dbReference>
<dbReference type="Pfam" id="PF00919">
    <property type="entry name" value="UPF0004"/>
    <property type="match status" value="1"/>
</dbReference>
<dbReference type="SFLD" id="SFLDF00273">
    <property type="entry name" value="(dimethylallyl)adenosine_tRNA"/>
    <property type="match status" value="1"/>
</dbReference>
<dbReference type="SFLD" id="SFLDG01082">
    <property type="entry name" value="B12-binding_domain_containing"/>
    <property type="match status" value="1"/>
</dbReference>
<dbReference type="SFLD" id="SFLDG01061">
    <property type="entry name" value="methylthiotransferase"/>
    <property type="match status" value="1"/>
</dbReference>
<dbReference type="SMART" id="SM00729">
    <property type="entry name" value="Elp3"/>
    <property type="match status" value="1"/>
</dbReference>
<dbReference type="SUPFAM" id="SSF102114">
    <property type="entry name" value="Radical SAM enzymes"/>
    <property type="match status" value="1"/>
</dbReference>
<dbReference type="PROSITE" id="PS51449">
    <property type="entry name" value="MTTASE_N"/>
    <property type="match status" value="1"/>
</dbReference>
<dbReference type="PROSITE" id="PS01278">
    <property type="entry name" value="MTTASE_RADICAL"/>
    <property type="match status" value="1"/>
</dbReference>
<dbReference type="PROSITE" id="PS51918">
    <property type="entry name" value="RADICAL_SAM"/>
    <property type="match status" value="1"/>
</dbReference>
<dbReference type="PROSITE" id="PS50926">
    <property type="entry name" value="TRAM"/>
    <property type="match status" value="1"/>
</dbReference>
<gene>
    <name evidence="1" type="primary">miaB</name>
    <name type="ordered locus">xcc-b100_1844</name>
</gene>
<evidence type="ECO:0000255" key="1">
    <source>
        <dbReference type="HAMAP-Rule" id="MF_01864"/>
    </source>
</evidence>
<evidence type="ECO:0000255" key="2">
    <source>
        <dbReference type="PROSITE-ProRule" id="PRU01266"/>
    </source>
</evidence>
<sequence>MPGTSVSDLPTTATAVDAPALLPLPVGRPQAPALVRGKLYIKTHGCQMNEYDSAKMADVLAASEGLELTDNPEDADVVLVNTCSIREKAQEKVFSQLGRWKALKAGGKPVIIGVGGCVASQEGEAIVKRAPYVDLVFGPQTLHRLPELIRARRESGKSQVDISFPEIEKFDRLPEPRADGPSAFVSIMEGCSKYCSFCVVPYTRGEEVSRPFEDVLVEVAQLAAQGVREINLLGQNVNAYRGAYGADAGEPAQYADLGLLIRTIAQIDGIGRIRFTTSHPLEFSDSLVDAYRDVPQLANYLHLPVQAGSDRILSAMKRGYTALEFKSKIRKLRAVRPDISISSDFIVGFPGETDADFDKTMKLIEDVGFDQSFSFIYSRRPGTPASDLEDDTPDAVKQARLARLQAHINAHAAGISQRMVGSVQRVLVEGPSRRDANELTGKTENMRPVNFPGNPRLVGQFVDVLITEALSNSLRGRIQLDDSAA</sequence>
<feature type="chain" id="PRO_0000374645" description="tRNA-2-methylthio-N(6)-dimethylallyladenosine synthase">
    <location>
        <begin position="1"/>
        <end position="485"/>
    </location>
</feature>
<feature type="domain" description="MTTase N-terminal" evidence="1">
    <location>
        <begin position="37"/>
        <end position="154"/>
    </location>
</feature>
<feature type="domain" description="Radical SAM core" evidence="2">
    <location>
        <begin position="177"/>
        <end position="416"/>
    </location>
</feature>
<feature type="domain" description="TRAM" evidence="1">
    <location>
        <begin position="417"/>
        <end position="480"/>
    </location>
</feature>
<feature type="binding site" evidence="1">
    <location>
        <position position="46"/>
    </location>
    <ligand>
        <name>[4Fe-4S] cluster</name>
        <dbReference type="ChEBI" id="CHEBI:49883"/>
        <label>1</label>
    </ligand>
</feature>
<feature type="binding site" evidence="1">
    <location>
        <position position="83"/>
    </location>
    <ligand>
        <name>[4Fe-4S] cluster</name>
        <dbReference type="ChEBI" id="CHEBI:49883"/>
        <label>1</label>
    </ligand>
</feature>
<feature type="binding site" evidence="1">
    <location>
        <position position="117"/>
    </location>
    <ligand>
        <name>[4Fe-4S] cluster</name>
        <dbReference type="ChEBI" id="CHEBI:49883"/>
        <label>1</label>
    </ligand>
</feature>
<feature type="binding site" evidence="1">
    <location>
        <position position="191"/>
    </location>
    <ligand>
        <name>[4Fe-4S] cluster</name>
        <dbReference type="ChEBI" id="CHEBI:49883"/>
        <label>2</label>
        <note>4Fe-4S-S-AdoMet</note>
    </ligand>
</feature>
<feature type="binding site" evidence="1">
    <location>
        <position position="195"/>
    </location>
    <ligand>
        <name>[4Fe-4S] cluster</name>
        <dbReference type="ChEBI" id="CHEBI:49883"/>
        <label>2</label>
        <note>4Fe-4S-S-AdoMet</note>
    </ligand>
</feature>
<feature type="binding site" evidence="1">
    <location>
        <position position="198"/>
    </location>
    <ligand>
        <name>[4Fe-4S] cluster</name>
        <dbReference type="ChEBI" id="CHEBI:49883"/>
        <label>2</label>
        <note>4Fe-4S-S-AdoMet</note>
    </ligand>
</feature>
<comment type="function">
    <text evidence="1">Catalyzes the methylthiolation of N6-(dimethylallyl)adenosine (i(6)A), leading to the formation of 2-methylthio-N6-(dimethylallyl)adenosine (ms(2)i(6)A) at position 37 in tRNAs that read codons beginning with uridine.</text>
</comment>
<comment type="catalytic activity">
    <reaction evidence="1">
        <text>N(6)-dimethylallyladenosine(37) in tRNA + (sulfur carrier)-SH + AH2 + 2 S-adenosyl-L-methionine = 2-methylsulfanyl-N(6)-dimethylallyladenosine(37) in tRNA + (sulfur carrier)-H + 5'-deoxyadenosine + L-methionine + A + S-adenosyl-L-homocysteine + 2 H(+)</text>
        <dbReference type="Rhea" id="RHEA:37067"/>
        <dbReference type="Rhea" id="RHEA-COMP:10375"/>
        <dbReference type="Rhea" id="RHEA-COMP:10376"/>
        <dbReference type="Rhea" id="RHEA-COMP:14737"/>
        <dbReference type="Rhea" id="RHEA-COMP:14739"/>
        <dbReference type="ChEBI" id="CHEBI:13193"/>
        <dbReference type="ChEBI" id="CHEBI:15378"/>
        <dbReference type="ChEBI" id="CHEBI:17319"/>
        <dbReference type="ChEBI" id="CHEBI:17499"/>
        <dbReference type="ChEBI" id="CHEBI:29917"/>
        <dbReference type="ChEBI" id="CHEBI:57844"/>
        <dbReference type="ChEBI" id="CHEBI:57856"/>
        <dbReference type="ChEBI" id="CHEBI:59789"/>
        <dbReference type="ChEBI" id="CHEBI:64428"/>
        <dbReference type="ChEBI" id="CHEBI:74415"/>
        <dbReference type="ChEBI" id="CHEBI:74417"/>
        <dbReference type="EC" id="2.8.4.3"/>
    </reaction>
</comment>
<comment type="cofactor">
    <cofactor evidence="1">
        <name>[4Fe-4S] cluster</name>
        <dbReference type="ChEBI" id="CHEBI:49883"/>
    </cofactor>
    <text evidence="1">Binds 2 [4Fe-4S] clusters. One cluster is coordinated with 3 cysteines and an exchangeable S-adenosyl-L-methionine.</text>
</comment>
<comment type="subunit">
    <text evidence="1">Monomer.</text>
</comment>
<comment type="subcellular location">
    <subcellularLocation>
        <location evidence="1">Cytoplasm</location>
    </subcellularLocation>
</comment>
<comment type="similarity">
    <text evidence="1">Belongs to the methylthiotransferase family. MiaB subfamily.</text>
</comment>